<proteinExistence type="inferred from homology"/>
<organism>
    <name type="scientific">Pseudomonas fluorescens (strain ATCC BAA-477 / NRRL B-23932 / Pf-5)</name>
    <dbReference type="NCBI Taxonomy" id="220664"/>
    <lineage>
        <taxon>Bacteria</taxon>
        <taxon>Pseudomonadati</taxon>
        <taxon>Pseudomonadota</taxon>
        <taxon>Gammaproteobacteria</taxon>
        <taxon>Pseudomonadales</taxon>
        <taxon>Pseudomonadaceae</taxon>
        <taxon>Pseudomonas</taxon>
    </lineage>
</organism>
<feature type="chain" id="PRO_0000352952" description="Threonylcarbamoyl-AMP synthase">
    <location>
        <begin position="1"/>
        <end position="185"/>
    </location>
</feature>
<feature type="domain" description="YrdC-like" evidence="1">
    <location>
        <begin position="4"/>
        <end position="185"/>
    </location>
</feature>
<name>TSAC_PSEF5</name>
<reference key="1">
    <citation type="journal article" date="2005" name="Nat. Biotechnol.">
        <title>Complete genome sequence of the plant commensal Pseudomonas fluorescens Pf-5.</title>
        <authorList>
            <person name="Paulsen I.T."/>
            <person name="Press C.M."/>
            <person name="Ravel J."/>
            <person name="Kobayashi D.Y."/>
            <person name="Myers G.S.A."/>
            <person name="Mavrodi D.V."/>
            <person name="DeBoy R.T."/>
            <person name="Seshadri R."/>
            <person name="Ren Q."/>
            <person name="Madupu R."/>
            <person name="Dodson R.J."/>
            <person name="Durkin A.S."/>
            <person name="Brinkac L.M."/>
            <person name="Daugherty S.C."/>
            <person name="Sullivan S.A."/>
            <person name="Rosovitz M.J."/>
            <person name="Gwinn M.L."/>
            <person name="Zhou L."/>
            <person name="Schneider D.J."/>
            <person name="Cartinhour S.W."/>
            <person name="Nelson W.C."/>
            <person name="Weidman J."/>
            <person name="Watkins K."/>
            <person name="Tran K."/>
            <person name="Khouri H."/>
            <person name="Pierson E.A."/>
            <person name="Pierson L.S. III"/>
            <person name="Thomashow L.S."/>
            <person name="Loper J.E."/>
        </authorList>
    </citation>
    <scope>NUCLEOTIDE SEQUENCE [LARGE SCALE GENOMIC DNA]</scope>
    <source>
        <strain>ATCC BAA-477 / NRRL B-23932 / Pf-5</strain>
    </source>
</reference>
<sequence>MVSSWRVQQAAREIRAGAVIAYPTEAVWGLGCDPWNEEAVDRLLAIKSRSVDKGLILIADNIHQFDFLFEDFPDTWIDRMSSTWPGPNTWLVPHQNLLPEWVTGVHDTVALRVSDHPLVRELCSLVGPLISTSANPQGRPAARTRLRIEQYFRGQLDLVLSGSLGGRKNPSLIRDLATGKVVRPS</sequence>
<comment type="function">
    <text evidence="1">Required for the formation of a threonylcarbamoyl group on adenosine at position 37 (t(6)A37) in tRNAs that read codons beginning with adenine. Catalyzes the conversion of L-threonine, HCO(3)(-)/CO(2) and ATP to give threonylcarbamoyl-AMP (TC-AMP) as the acyladenylate intermediate, with the release of diphosphate.</text>
</comment>
<comment type="catalytic activity">
    <reaction evidence="1">
        <text>L-threonine + hydrogencarbonate + ATP = L-threonylcarbamoyladenylate + diphosphate + H2O</text>
        <dbReference type="Rhea" id="RHEA:36407"/>
        <dbReference type="ChEBI" id="CHEBI:15377"/>
        <dbReference type="ChEBI" id="CHEBI:17544"/>
        <dbReference type="ChEBI" id="CHEBI:30616"/>
        <dbReference type="ChEBI" id="CHEBI:33019"/>
        <dbReference type="ChEBI" id="CHEBI:57926"/>
        <dbReference type="ChEBI" id="CHEBI:73682"/>
        <dbReference type="EC" id="2.7.7.87"/>
    </reaction>
</comment>
<comment type="subcellular location">
    <subcellularLocation>
        <location evidence="1">Cytoplasm</location>
    </subcellularLocation>
</comment>
<comment type="similarity">
    <text evidence="1">Belongs to the SUA5 family. TsaC subfamily.</text>
</comment>
<gene>
    <name evidence="1" type="primary">tsaC</name>
    <name type="synonym">rimN</name>
    <name type="ordered locus">PFL_0025</name>
</gene>
<evidence type="ECO:0000255" key="1">
    <source>
        <dbReference type="HAMAP-Rule" id="MF_01852"/>
    </source>
</evidence>
<keyword id="KW-0067">ATP-binding</keyword>
<keyword id="KW-0963">Cytoplasm</keyword>
<keyword id="KW-0547">Nucleotide-binding</keyword>
<keyword id="KW-0548">Nucleotidyltransferase</keyword>
<keyword id="KW-0808">Transferase</keyword>
<keyword id="KW-0819">tRNA processing</keyword>
<accession>Q4KKQ6</accession>
<protein>
    <recommendedName>
        <fullName evidence="1">Threonylcarbamoyl-AMP synthase</fullName>
        <shortName evidence="1">TC-AMP synthase</shortName>
        <ecNumber evidence="1">2.7.7.87</ecNumber>
    </recommendedName>
    <alternativeName>
        <fullName evidence="1">L-threonylcarbamoyladenylate synthase</fullName>
    </alternativeName>
    <alternativeName>
        <fullName evidence="1">t(6)A37 threonylcarbamoyladenosine biosynthesis protein TsaC</fullName>
    </alternativeName>
    <alternativeName>
        <fullName evidence="1">tRNA threonylcarbamoyladenosine biosynthesis protein TsaC</fullName>
    </alternativeName>
</protein>
<dbReference type="EC" id="2.7.7.87" evidence="1"/>
<dbReference type="EMBL" id="CP000076">
    <property type="protein sequence ID" value="AAY95443.1"/>
    <property type="molecule type" value="Genomic_DNA"/>
</dbReference>
<dbReference type="RefSeq" id="WP_011058414.1">
    <property type="nucleotide sequence ID" value="NC_004129.6"/>
</dbReference>
<dbReference type="SMR" id="Q4KKQ6"/>
<dbReference type="STRING" id="220664.PFL_0025"/>
<dbReference type="KEGG" id="pfl:PFL_0025"/>
<dbReference type="PATRIC" id="fig|220664.5.peg.25"/>
<dbReference type="eggNOG" id="COG0009">
    <property type="taxonomic scope" value="Bacteria"/>
</dbReference>
<dbReference type="HOGENOM" id="CLU_031397_6_0_6"/>
<dbReference type="Proteomes" id="UP000008540">
    <property type="component" value="Chromosome"/>
</dbReference>
<dbReference type="GO" id="GO:0005737">
    <property type="term" value="C:cytoplasm"/>
    <property type="evidence" value="ECO:0007669"/>
    <property type="project" value="UniProtKB-SubCell"/>
</dbReference>
<dbReference type="GO" id="GO:0005524">
    <property type="term" value="F:ATP binding"/>
    <property type="evidence" value="ECO:0007669"/>
    <property type="project" value="UniProtKB-UniRule"/>
</dbReference>
<dbReference type="GO" id="GO:0003725">
    <property type="term" value="F:double-stranded RNA binding"/>
    <property type="evidence" value="ECO:0007669"/>
    <property type="project" value="InterPro"/>
</dbReference>
<dbReference type="GO" id="GO:0061710">
    <property type="term" value="F:L-threonylcarbamoyladenylate synthase"/>
    <property type="evidence" value="ECO:0007669"/>
    <property type="project" value="UniProtKB-EC"/>
</dbReference>
<dbReference type="GO" id="GO:0000049">
    <property type="term" value="F:tRNA binding"/>
    <property type="evidence" value="ECO:0007669"/>
    <property type="project" value="TreeGrafter"/>
</dbReference>
<dbReference type="GO" id="GO:0006450">
    <property type="term" value="P:regulation of translational fidelity"/>
    <property type="evidence" value="ECO:0007669"/>
    <property type="project" value="TreeGrafter"/>
</dbReference>
<dbReference type="GO" id="GO:0002949">
    <property type="term" value="P:tRNA threonylcarbamoyladenosine modification"/>
    <property type="evidence" value="ECO:0007669"/>
    <property type="project" value="UniProtKB-UniRule"/>
</dbReference>
<dbReference type="FunFam" id="3.90.870.10:FF:000004">
    <property type="entry name" value="Threonylcarbamoyl-AMP synthase"/>
    <property type="match status" value="1"/>
</dbReference>
<dbReference type="Gene3D" id="3.90.870.10">
    <property type="entry name" value="DHBP synthase"/>
    <property type="match status" value="1"/>
</dbReference>
<dbReference type="HAMAP" id="MF_01852">
    <property type="entry name" value="TsaC"/>
    <property type="match status" value="1"/>
</dbReference>
<dbReference type="InterPro" id="IPR017945">
    <property type="entry name" value="DHBP_synth_RibB-like_a/b_dom"/>
</dbReference>
<dbReference type="InterPro" id="IPR006070">
    <property type="entry name" value="Sua5-like_dom"/>
</dbReference>
<dbReference type="InterPro" id="IPR023535">
    <property type="entry name" value="TC-AMP_synthase"/>
</dbReference>
<dbReference type="InterPro" id="IPR050156">
    <property type="entry name" value="TC-AMP_synthase_SUA5"/>
</dbReference>
<dbReference type="NCBIfam" id="TIGR00057">
    <property type="entry name" value="L-threonylcarbamoyladenylate synthase"/>
    <property type="match status" value="1"/>
</dbReference>
<dbReference type="PANTHER" id="PTHR17490">
    <property type="entry name" value="SUA5"/>
    <property type="match status" value="1"/>
</dbReference>
<dbReference type="PANTHER" id="PTHR17490:SF18">
    <property type="entry name" value="THREONYLCARBAMOYL-AMP SYNTHASE"/>
    <property type="match status" value="1"/>
</dbReference>
<dbReference type="Pfam" id="PF01300">
    <property type="entry name" value="Sua5_yciO_yrdC"/>
    <property type="match status" value="1"/>
</dbReference>
<dbReference type="SUPFAM" id="SSF55821">
    <property type="entry name" value="YrdC/RibB"/>
    <property type="match status" value="1"/>
</dbReference>
<dbReference type="PROSITE" id="PS51163">
    <property type="entry name" value="YRDC"/>
    <property type="match status" value="1"/>
</dbReference>